<accession>C5BF17</accession>
<keyword id="KW-0378">Hydrolase</keyword>
<keyword id="KW-0408">Iron</keyword>
<keyword id="KW-0479">Metal-binding</keyword>
<keyword id="KW-0648">Protein biosynthesis</keyword>
<protein>
    <recommendedName>
        <fullName evidence="1">Peptide deformylase</fullName>
        <shortName evidence="1">PDF</shortName>
        <ecNumber evidence="1">3.5.1.88</ecNumber>
    </recommendedName>
    <alternativeName>
        <fullName evidence="1">Polypeptide deformylase</fullName>
    </alternativeName>
</protein>
<name>DEF_EDWI9</name>
<comment type="function">
    <text evidence="1">Removes the formyl group from the N-terminal Met of newly synthesized proteins. Requires at least a dipeptide for an efficient rate of reaction. N-terminal L-methionine is a prerequisite for activity but the enzyme has broad specificity at other positions.</text>
</comment>
<comment type="catalytic activity">
    <reaction evidence="1">
        <text>N-terminal N-formyl-L-methionyl-[peptide] + H2O = N-terminal L-methionyl-[peptide] + formate</text>
        <dbReference type="Rhea" id="RHEA:24420"/>
        <dbReference type="Rhea" id="RHEA-COMP:10639"/>
        <dbReference type="Rhea" id="RHEA-COMP:10640"/>
        <dbReference type="ChEBI" id="CHEBI:15377"/>
        <dbReference type="ChEBI" id="CHEBI:15740"/>
        <dbReference type="ChEBI" id="CHEBI:49298"/>
        <dbReference type="ChEBI" id="CHEBI:64731"/>
        <dbReference type="EC" id="3.5.1.88"/>
    </reaction>
</comment>
<comment type="cofactor">
    <cofactor evidence="1">
        <name>Fe(2+)</name>
        <dbReference type="ChEBI" id="CHEBI:29033"/>
    </cofactor>
    <text evidence="1">Binds 1 Fe(2+) ion.</text>
</comment>
<comment type="similarity">
    <text evidence="1">Belongs to the polypeptide deformylase family.</text>
</comment>
<organism>
    <name type="scientific">Edwardsiella ictaluri (strain 93-146)</name>
    <dbReference type="NCBI Taxonomy" id="634503"/>
    <lineage>
        <taxon>Bacteria</taxon>
        <taxon>Pseudomonadati</taxon>
        <taxon>Pseudomonadota</taxon>
        <taxon>Gammaproteobacteria</taxon>
        <taxon>Enterobacterales</taxon>
        <taxon>Hafniaceae</taxon>
        <taxon>Edwardsiella</taxon>
    </lineage>
</organism>
<reference key="1">
    <citation type="submission" date="2009-03" db="EMBL/GenBank/DDBJ databases">
        <title>Complete genome sequence of Edwardsiella ictaluri 93-146.</title>
        <authorList>
            <person name="Williams M.L."/>
            <person name="Gillaspy A.F."/>
            <person name="Dyer D.W."/>
            <person name="Thune R.L."/>
            <person name="Waldbieser G.C."/>
            <person name="Schuster S.C."/>
            <person name="Gipson J."/>
            <person name="Zaitshik J."/>
            <person name="Landry C."/>
            <person name="Lawrence M.L."/>
        </authorList>
    </citation>
    <scope>NUCLEOTIDE SEQUENCE [LARGE SCALE GENOMIC DNA]</scope>
    <source>
        <strain>93-146</strain>
    </source>
</reference>
<feature type="chain" id="PRO_1000203602" description="Peptide deformylase">
    <location>
        <begin position="1"/>
        <end position="171"/>
    </location>
</feature>
<feature type="active site" evidence="1">
    <location>
        <position position="134"/>
    </location>
</feature>
<feature type="binding site" evidence="1">
    <location>
        <position position="91"/>
    </location>
    <ligand>
        <name>Fe cation</name>
        <dbReference type="ChEBI" id="CHEBI:24875"/>
    </ligand>
</feature>
<feature type="binding site" evidence="1">
    <location>
        <position position="133"/>
    </location>
    <ligand>
        <name>Fe cation</name>
        <dbReference type="ChEBI" id="CHEBI:24875"/>
    </ligand>
</feature>
<feature type="binding site" evidence="1">
    <location>
        <position position="137"/>
    </location>
    <ligand>
        <name>Fe cation</name>
        <dbReference type="ChEBI" id="CHEBI:24875"/>
    </ligand>
</feature>
<evidence type="ECO:0000255" key="1">
    <source>
        <dbReference type="HAMAP-Rule" id="MF_00163"/>
    </source>
</evidence>
<dbReference type="EC" id="3.5.1.88" evidence="1"/>
<dbReference type="EMBL" id="CP001600">
    <property type="protein sequence ID" value="ACR70689.1"/>
    <property type="molecule type" value="Genomic_DNA"/>
</dbReference>
<dbReference type="RefSeq" id="WP_015872754.1">
    <property type="nucleotide sequence ID" value="NZ_CP169062.1"/>
</dbReference>
<dbReference type="SMR" id="C5BF17"/>
<dbReference type="STRING" id="67780.B6E78_09400"/>
<dbReference type="GeneID" id="69540403"/>
<dbReference type="KEGG" id="eic:NT01EI_3560"/>
<dbReference type="PATRIC" id="fig|634503.3.peg.3166"/>
<dbReference type="HOGENOM" id="CLU_061901_2_1_6"/>
<dbReference type="OrthoDB" id="9804313at2"/>
<dbReference type="Proteomes" id="UP000001485">
    <property type="component" value="Chromosome"/>
</dbReference>
<dbReference type="GO" id="GO:0046872">
    <property type="term" value="F:metal ion binding"/>
    <property type="evidence" value="ECO:0007669"/>
    <property type="project" value="UniProtKB-KW"/>
</dbReference>
<dbReference type="GO" id="GO:0042586">
    <property type="term" value="F:peptide deformylase activity"/>
    <property type="evidence" value="ECO:0007669"/>
    <property type="project" value="UniProtKB-UniRule"/>
</dbReference>
<dbReference type="GO" id="GO:0043686">
    <property type="term" value="P:co-translational protein modification"/>
    <property type="evidence" value="ECO:0007669"/>
    <property type="project" value="TreeGrafter"/>
</dbReference>
<dbReference type="GO" id="GO:0006412">
    <property type="term" value="P:translation"/>
    <property type="evidence" value="ECO:0007669"/>
    <property type="project" value="UniProtKB-UniRule"/>
</dbReference>
<dbReference type="CDD" id="cd00487">
    <property type="entry name" value="Pep_deformylase"/>
    <property type="match status" value="1"/>
</dbReference>
<dbReference type="FunFam" id="3.90.45.10:FF:000001">
    <property type="entry name" value="Peptide deformylase"/>
    <property type="match status" value="1"/>
</dbReference>
<dbReference type="Gene3D" id="3.90.45.10">
    <property type="entry name" value="Peptide deformylase"/>
    <property type="match status" value="1"/>
</dbReference>
<dbReference type="HAMAP" id="MF_00163">
    <property type="entry name" value="Pep_deformylase"/>
    <property type="match status" value="1"/>
</dbReference>
<dbReference type="InterPro" id="IPR023635">
    <property type="entry name" value="Peptide_deformylase"/>
</dbReference>
<dbReference type="InterPro" id="IPR036821">
    <property type="entry name" value="Peptide_deformylase_sf"/>
</dbReference>
<dbReference type="NCBIfam" id="TIGR00079">
    <property type="entry name" value="pept_deformyl"/>
    <property type="match status" value="1"/>
</dbReference>
<dbReference type="NCBIfam" id="NF001159">
    <property type="entry name" value="PRK00150.1-3"/>
    <property type="match status" value="1"/>
</dbReference>
<dbReference type="PANTHER" id="PTHR10458">
    <property type="entry name" value="PEPTIDE DEFORMYLASE"/>
    <property type="match status" value="1"/>
</dbReference>
<dbReference type="PANTHER" id="PTHR10458:SF21">
    <property type="entry name" value="PEPTIDE DEFORMYLASE"/>
    <property type="match status" value="1"/>
</dbReference>
<dbReference type="Pfam" id="PF01327">
    <property type="entry name" value="Pep_deformylase"/>
    <property type="match status" value="1"/>
</dbReference>
<dbReference type="PIRSF" id="PIRSF004749">
    <property type="entry name" value="Pep_def"/>
    <property type="match status" value="1"/>
</dbReference>
<dbReference type="PRINTS" id="PR01576">
    <property type="entry name" value="PDEFORMYLASE"/>
</dbReference>
<dbReference type="SUPFAM" id="SSF56420">
    <property type="entry name" value="Peptide deformylase"/>
    <property type="match status" value="1"/>
</dbReference>
<proteinExistence type="inferred from homology"/>
<sequence length="171" mass="19660">MAVLQVLHFPDERLRTIAKPVHEVTPEIQRIVDDMFETMYAEEGIGLAATQVDIHQRIIVIDVSENRDQRLVLINPELLQHDGEAGIEEGCLSVPEQRALVTRAENIKVRALDRDGKSFELETDGLLAICIQHEMDHLMGKLFIDYLSPLKRQRIRQKLEKLYKQQARAVN</sequence>
<gene>
    <name evidence="1" type="primary">def</name>
    <name type="ordered locus">NT01EI_3560</name>
</gene>